<accession>P85808</accession>
<name>TRP7_RHOPR</name>
<feature type="peptide" id="PRO_0000365758" description="Tachykinin-related peptide 7" evidence="1">
    <location>
        <begin position="1"/>
        <end position="11"/>
    </location>
</feature>
<feature type="modified residue" description="Arginine amide" evidence="1">
    <location>
        <position position="11"/>
    </location>
</feature>
<protein>
    <recommendedName>
        <fullName evidence="2">Tachykinin-related peptide 7</fullName>
        <shortName evidence="2">Rhopr-TRP-7</shortName>
    </recommendedName>
</protein>
<keyword id="KW-0027">Amidation</keyword>
<keyword id="KW-0903">Direct protein sequencing</keyword>
<keyword id="KW-0527">Neuropeptide</keyword>
<keyword id="KW-1185">Reference proteome</keyword>
<keyword id="KW-0964">Secreted</keyword>
<organism>
    <name type="scientific">Rhodnius prolixus</name>
    <name type="common">Triatomid bug</name>
    <dbReference type="NCBI Taxonomy" id="13249"/>
    <lineage>
        <taxon>Eukaryota</taxon>
        <taxon>Metazoa</taxon>
        <taxon>Ecdysozoa</taxon>
        <taxon>Arthropoda</taxon>
        <taxon>Hexapoda</taxon>
        <taxon>Insecta</taxon>
        <taxon>Pterygota</taxon>
        <taxon>Neoptera</taxon>
        <taxon>Paraneoptera</taxon>
        <taxon>Hemiptera</taxon>
        <taxon>Heteroptera</taxon>
        <taxon>Panheteroptera</taxon>
        <taxon>Cimicomorpha</taxon>
        <taxon>Reduviidae</taxon>
        <taxon>Triatominae</taxon>
        <taxon>Rhodnius</taxon>
    </lineage>
</organism>
<sequence length="11" mass="1093">SPATMGFAGVR</sequence>
<evidence type="ECO:0000269" key="1">
    <source>
    </source>
</evidence>
<evidence type="ECO:0000303" key="2">
    <source>
    </source>
</evidence>
<evidence type="ECO:0000305" key="3"/>
<reference evidence="3" key="1">
    <citation type="journal article" date="2009" name="Proteomics">
        <title>The neuropeptidome of Rhodnius prolixus brain.</title>
        <authorList>
            <person name="Ons S."/>
            <person name="Richter F."/>
            <person name="Urlaub H."/>
            <person name="Pomar R.R."/>
        </authorList>
    </citation>
    <scope>PROTEIN SEQUENCE</scope>
    <scope>MASS SPECTROMETRY</scope>
    <scope>AMIDATION AT ARG-11</scope>
    <source>
        <tissue evidence="1">Brain</tissue>
    </source>
</reference>
<dbReference type="InParanoid" id="P85808"/>
<dbReference type="Proteomes" id="UP000015103">
    <property type="component" value="Unassembled WGS sequence"/>
</dbReference>
<dbReference type="GO" id="GO:0005576">
    <property type="term" value="C:extracellular region"/>
    <property type="evidence" value="ECO:0007669"/>
    <property type="project" value="UniProtKB-SubCell"/>
</dbReference>
<dbReference type="GO" id="GO:0007218">
    <property type="term" value="P:neuropeptide signaling pathway"/>
    <property type="evidence" value="ECO:0007669"/>
    <property type="project" value="UniProtKB-KW"/>
</dbReference>
<proteinExistence type="evidence at protein level"/>
<comment type="function">
    <text evidence="3">Myoactive peptide. Increases the amplitude and frequency of spontaneous contractions and tonus of hindgut muscle.</text>
</comment>
<comment type="subcellular location">
    <subcellularLocation>
        <location evidence="3">Secreted</location>
    </subcellularLocation>
</comment>
<comment type="mass spectrometry" mass="1149.53" method="MALDI" evidence="1"/>